<protein>
    <recommendedName>
        <fullName evidence="6">Cyclochlorotine synthetase</fullName>
        <ecNumber evidence="8">6.3.2.-</ecNumber>
    </recommendedName>
    <alternativeName>
        <fullName evidence="6">Cyclochlorotine biosynthesis protein N</fullName>
    </alternativeName>
    <alternativeName>
        <fullName evidence="6">Nonribosomal peptide synthetase cctN</fullName>
        <shortName evidence="6">NRPS cctN</shortName>
    </alternativeName>
</protein>
<comment type="function">
    <text evidence="4 5 9">Nonribosomal peptide synthetase; part of the gene cluster that mediates the biosynthesis of the mycotoxin cyclochlorotine, a hepatotoxic and carcinogenic cyclic chlorinated pentapeptide (PubMed:26954535, PubMed:33736433). Within the pathway, The NRPS cctN initially catalyzes the condensation of L-serine (Ser), Pro, L-2-aminobutyrate (2Abu), Ser, and beta-Phe in this order. During the chain elongation, side-chain hydroxy group of Ser4 would be used as a nucleophile, giving isocyclotine as a product of terminal condensation-like (CT) domain-catalyzed cyclization (PubMed:26954535, PubMed:33736433). After the dichlorination of Pro2 catalyzed by cctP2 to produce isocyclochlorotine, the cctO-mediated transacylation of isocyclochlorotine can furnish cyclochlorotine. The subsequent hydroxylation of cyclochlorotine by cctR yields hydroxycyclochlorotine as the final product. CctP1 probably acts as a phenylalanine aminomutase and provides the uncommon building block beta-Phe. Furthermore, 2Abu can be synthesized from threonine by one of the threonine dehydratases and transaminases localized outside of the cluster. The functions of the remaining proteins encoded by the cluster, cctM and cctT, have not been identified yet (Probable) (PubMed:33736433).</text>
</comment>
<comment type="pathway">
    <text evidence="4">Mycotoxin biosynthesis.</text>
</comment>
<comment type="domain">
    <text evidence="4">NRP synthetases are composed of discrete domains (adenylation (A), thiolation (T) or peptidyl carrier protein (PCP) and condensation (C) domains) which when grouped together are referred to as a single module (PubMed:26954535). Each module is responsible for the recognition (via the A domain) and incorporation of a single amino acid into the growing peptide product. Thus, an NRP synthetase is generally composed of one or more modules and can terminate in a thioesterase domain (TE) that releases the newly synthesized peptide from the enzyme. Occasionally, epimerase (E) domains (responsible for L- to D-amino acid conversion) are present within the NRP synthetase. VlmS has the following 7 module architecture: A-T-C-A-T-C-A-T-C-A-T-C-A-T-C (PubMed:26954535). The assembled linear pentapeptide, tethered to domain T5 of module 5, is then assumed to be released through cyclization by the terminal condensation-like domain which shows the characteristic variations in the first histidine residue of the highly conserved HHxxxDGxS motif of C domains (PubMed:26954535).</text>
</comment>
<comment type="disruption phenotype">
    <text evidence="4">Leads to complete loss of production of cyclochlorotine and its variants such as hydroxy-cyclochlorotine and deoxy-cyclochlorotine (PubMed:26954535).</text>
</comment>
<comment type="similarity">
    <text evidence="7">Belongs to the NRP synthetase family.</text>
</comment>
<proteinExistence type="inferred from homology"/>
<feature type="chain" id="PRO_0000438669" description="Cyclochlorotine synthetase">
    <location>
        <begin position="1"/>
        <end position="5641"/>
    </location>
</feature>
<feature type="domain" description="Carrier 1" evidence="2">
    <location>
        <begin position="816"/>
        <end position="892"/>
    </location>
</feature>
<feature type="domain" description="Carrier 2" evidence="2">
    <location>
        <begin position="1902"/>
        <end position="1978"/>
    </location>
</feature>
<feature type="domain" description="Carrier 3" evidence="2">
    <location>
        <begin position="2976"/>
        <end position="3052"/>
    </location>
</feature>
<feature type="domain" description="Carrier 4" evidence="2">
    <location>
        <begin position="4005"/>
        <end position="4081"/>
    </location>
</feature>
<feature type="domain" description="Carrier 5" evidence="2">
    <location>
        <begin position="5118"/>
        <end position="5194"/>
    </location>
</feature>
<feature type="region of interest" description="Disordered" evidence="3">
    <location>
        <begin position="95"/>
        <end position="124"/>
    </location>
</feature>
<feature type="region of interest" description="Adenylation (A) domain 1" evidence="1 8">
    <location>
        <begin position="217"/>
        <end position="622"/>
    </location>
</feature>
<feature type="region of interest" description="Thiolation (T) domain 1" evidence="1 8">
    <location>
        <begin position="821"/>
        <end position="889"/>
    </location>
</feature>
<feature type="region of interest" description="Condensation (C) domain 1" evidence="1 8">
    <location>
        <begin position="926"/>
        <end position="1333"/>
    </location>
</feature>
<feature type="region of interest" description="Adenylation (A) domain 2" evidence="1 8">
    <location>
        <begin position="1390"/>
        <end position="1768"/>
    </location>
</feature>
<feature type="region of interest" description="Thiolation (T) domain 2" evidence="1 8">
    <location>
        <begin position="1907"/>
        <end position="1975"/>
    </location>
</feature>
<feature type="region of interest" description="Condensation (C) domain 2" evidence="1 8">
    <location>
        <begin position="2022"/>
        <end position="2438"/>
    </location>
</feature>
<feature type="region of interest" description="Adenylation (A) domain 3" evidence="1 8">
    <location>
        <begin position="2459"/>
        <end position="2859"/>
    </location>
</feature>
<feature type="region of interest" description="Thiolation (T) domain 3" evidence="1 8">
    <location>
        <begin position="2977"/>
        <end position="3049"/>
    </location>
</feature>
<feature type="region of interest" description="Condensation (C) domain 3" evidence="1 8">
    <location>
        <begin position="3089"/>
        <end position="3482"/>
    </location>
</feature>
<feature type="region of interest" description="Adenylation (A) domain 4" evidence="1 8">
    <location>
        <begin position="3523"/>
        <end position="3873"/>
    </location>
</feature>
<feature type="region of interest" description="Thiolation (T) domain 4" evidence="1 8">
    <location>
        <begin position="4010"/>
        <end position="4078"/>
    </location>
</feature>
<feature type="region of interest" description="Condensation (C) domain 4" evidence="1 8">
    <location>
        <begin position="4123"/>
        <end position="4549"/>
    </location>
</feature>
<feature type="region of interest" description="Adenylation (A) domain 5" evidence="1 8">
    <location>
        <begin position="4574"/>
        <end position="4982"/>
    </location>
</feature>
<feature type="region of interest" description="Thiolation (T) domain 5" evidence="1 8">
    <location>
        <begin position="5123"/>
        <end position="5191"/>
    </location>
</feature>
<feature type="region of interest" description="Condensation (C) domain 5" evidence="1 8">
    <location>
        <begin position="5260"/>
        <end position="5556"/>
    </location>
</feature>
<feature type="compositionally biased region" description="Basic and acidic residues" evidence="3">
    <location>
        <begin position="111"/>
        <end position="124"/>
    </location>
</feature>
<feature type="modified residue" description="O-(pantetheine 4'-phosphoryl)serine" evidence="2">
    <location>
        <position position="853"/>
    </location>
</feature>
<feature type="modified residue" description="O-(pantetheine 4'-phosphoryl)serine" evidence="2">
    <location>
        <position position="1939"/>
    </location>
</feature>
<feature type="modified residue" description="O-(pantetheine 4'-phosphoryl)serine" evidence="2">
    <location>
        <position position="3013"/>
    </location>
</feature>
<feature type="modified residue" description="O-(pantetheine 4'-phosphoryl)serine" evidence="2">
    <location>
        <position position="4042"/>
    </location>
</feature>
<feature type="modified residue" description="O-(pantetheine 4'-phosphoryl)serine" evidence="2">
    <location>
        <position position="5155"/>
    </location>
</feature>
<evidence type="ECO:0000255" key="1"/>
<evidence type="ECO:0000255" key="2">
    <source>
        <dbReference type="PROSITE-ProRule" id="PRU00258"/>
    </source>
</evidence>
<evidence type="ECO:0000256" key="3">
    <source>
        <dbReference type="SAM" id="MobiDB-lite"/>
    </source>
</evidence>
<evidence type="ECO:0000269" key="4">
    <source>
    </source>
</evidence>
<evidence type="ECO:0000269" key="5">
    <source>
    </source>
</evidence>
<evidence type="ECO:0000303" key="6">
    <source>
    </source>
</evidence>
<evidence type="ECO:0000305" key="7"/>
<evidence type="ECO:0000305" key="8">
    <source>
    </source>
</evidence>
<evidence type="ECO:0000305" key="9">
    <source>
    </source>
</evidence>
<sequence>MYTDKFRFKTGVSSFQILLAWTVLLKDYIGSSGVSFSFSDSTQCHKGTGKIDLELDEHDTIGLLSRRIKEQLLVKSDSNEYLSFKTHLDISSGEPENLNGHLIGSTNGHKKQWENDSADDKRGQHPREIVDWTIKCVLSEDGRGMKTTAIPKLSTASSRQGLRLMYQLEHVLRHIHLSTEGTLVYKIDTATKSDLNDIWKWNFNNPPLSERTVLEIFTENVQRYPTATAVNAWDGDLSYQELDRLSTEFSFHLAYAGVKRGNIVPLFFEKSMWTPVAIWAVIKTGAAFVLLDEVLPESRLQQLGQVIRQEIIVALASSSQESRAKLLGTQVIIIDSYYLETAASVPSEFKTQPQIQPSDLIYIVFTSGTTGVPKAVMIQHSNVSAFARSLRTISDVGPNSRIVALSSYAFDVSLGNLFLSLLSGCCLCIPSSWECRNTVPRVLQDYQITHAQMTPSISKMLRPCQLSTLEVLELSGEQCTEDVLARWQETPIRVMNTYSPAECTITTVGNGNVLTSSKSSIIGKGLGNCCWVLDPIDHDRLSPVGGIGELVLEGPSVGMGYLHDPRATALKFFEDPEWLLKGLPGVSPGRKGRLYRTGDLVRYTEDGSIDFVGRRDTQVKIRGQRVELGEISAHLQQLVHPSIWCSPEVVKVSSGTELLVVFLVVTEDEVGNGTASILRSTLRVTVDLVDSELRSRLPPAMVPGAYACIKDIPLTLTGKTDHRKLREIGLSLAADMLIFPSNKQESYATNGDRQNRGLHTTLNGNGYQEQNGHAHTHAHTNGDTNGHTNGYVNGSHSHTNSRNKTQKYGHVTYDGTEEEYKIQTLKEIWSDEFHVDIESITLSDSFFAHGGESLTAIKMVGVAFEKGIQLDVPTIFRHPQLSDLVSNCKMSATASPDHPKPFSLLEGEIIPVEAVEACGTCLDNIEDVYPCTPLQEGLITASISKSTAYVGQKAFLLPDGINFERLALAWQRVVQTHQILRTRIFDTESHGLLQAVLTDGKVFLGIQKRDLKSYLEDDNDRKMGLGTELCRCAIVRESGCSYFVLTMHHAIYDGWTLPRIGSEVFKAYQGVRVEPNMGFNAFIKHIKSLPSQTANKFWAHQLANPGESAVFPIVPLYIQEPKSDSTVSKRFPVPQNANSGVSMPSLLRSAWALLVSKLSDSNDVTFGATVSGRNVPIYGIKDLLSPTISTVPVRVKIDKDSNIETFIATVQDDSLSAIPFENFGLQNIRKINTDTREGSKFQTLFVVHPPNSTTPDQTLNLSLADHELKDILENLDISSVLSNFNEYGLMVIVTQEQDSLIVQASYDSRVLETDQVILLLDQFAHVAEQIGQPANLACKVQELQFASGKDVETIWTWNSTRVPGLKECIHDVICRTIAVQPHGQAISAWDGNLTFEELNVLSLRLAHILRSKGVGRGSLVPICMEKSKWATIAMLGILRIGAGFIAMDVRHQPRQRLQTIADAVNSKWIVTAGPATELVPDVSEGVIVCDQDLQIETSDFPVPLEPVCSASSDTAFVVFTSGTTGVPKGIVITHENFCSTIQHHAHQLKISKESRIYDYASYSFDIAVHNSLMAMCLGACLCIPSEDERENDIEGSFERLQANWTDITPSVARLVDPTGVPGLKTLVLSGEAVRKDLVERWATKVNLINAYGPAECQICTIQENIIDPQQAAHIGRAVGCTAWIIDPENDSLCPIGAVGELVIEGPIVSPGYLNATRDAFIQDPKWLIEGSASIPGRRGSVYRTGDLCRFRPDGTIIYISRATTQIKINGQRIELEDVEFYVQQAMATPGQVIASVVNFDGVNHLTAFLAPVPTLKTNDKFHGLGKDVEPTVELIPPPIGLQNKLKDALPAYMIPTVFLKISHIPLTTTRKIDRRQLNDCASRISRDDLIALDQEGTGPVKIELSEKQENMARLWAQVLKLNSSKIGLHSDFFRLGGESISAMRLVKYARKEGLVLTVADIFRHSRFDQLVMIATELTSRENTAEYFNGKLQPFALVPMNHRDSLISTAAMACNLPSDDIIDIYACTPFQEGVFALTASNSSAYVQHTELRFSDELNLDQVLDAWVSVIAANPILRTRFIQSEDAKLMQVVVRPQKQAWKWYYSPQEYLSEAENIPFGLGDPLFCFGLVRHGSTSSPGHTLIWTLHHAVYDAWTMDLILRQVSSCYYGEKQAESGPDYSVFVDFLRHQESESANWWKSYLSGSSDASIFPKMPISAAESQIDNTIRKEFAMPNIVPPGYSPAVILRAAWAAAVARYTGDESVLFGETRLGRNVPVSGIDKLLGPTIASVPLLVHIDREQTIGSLLYAIREDGLQMQPFEHLGLQNISHISEDTKAACKFQTLLVFLENAEDVDSSSIFKIDETIDDIRNFNSYYLLVYFTLNQKGLVAQAVFKDSAISSGQVEFLLEQVQSIFSKLCESPLDTPLRSLDLASEQDLAKIWNWNATSAEAVDKFVHELIAEKARQHPNKLAVFAHDGQITYKELDDYSTNLASQLIGRGIGLGCFVPLCFEKSAMVPVCMLAVIKTGAAFYVMDVSYPEGRLKLITETLKASLMLASPSQQWLAKRLAGNILVVDSVCCTDNTYRSSHPVIEDPSRNTNRLMYVCFTSGSTGLPKGVMVTHKNISSAAVAQTQDLDFDPEDRVYDFSSHAFDANIWHFYLGFIVGACVCIPSQEDRIGNLAGSITFFQSTALFLTPSVARTLDPKELPTVKRLYLGGEAVTPLDVSKWVEHLDLWGAYGPTETTPLCIFTRLHSPEFASNIGKGVGVRSWICNPNNNEELMAIGAVGEMVNEGPLVTQGYYEQPEKTAKVFIENPEFLLRGYKEIPGRRGRLYRTGDLVRYAFDGSIEYLGRADTQVKLRGQRVEFGEIEYHLNNALPGTSSICEVIIHPSSRMPMLAAFCTLSSSMDTLNETGARAYLCKRVPPYMVPEFFFTIPEIPKNPSGKVDRLKLRSFGPQVLLERSTSHEEGSVTERVHGPLTEMETTLAELWATAVDHDVTWLGMESEFADVGGDSIAAMKLSNLARRHELSLTVKDIINSSNLAGMAIKIQPIHESFASPQPFSLLPPSRIDQTVARAAMTCGVSIDSITDIYPCTPLQVELFSLTMKQPQAYIKRSVFEVPTSVNFEKLIESWDSVFDINAILRTRFVEVDDLGLLQVVIKGHQRKKYGSLDSFIQACSQERLDFGSPLSHLAVVEDSVALKIAWTIHHALYDEWSTLIIEEQLRQAYRSRCIPRPPDYSEFVRYIRTNNHEEARGFWRNSLAGCISAKIYPELPVGNYQVRPRKAFKRSLQYSARPGVNIQATIHAAWALIVSRLSASDDVVFSTTLAGRNAPVAGIEQMVGPTITPVPIRVKLGNQKQSVQSMLDMIEKDIAKMAPYQHIGTKNIERINDDTRAACKFRTLIVVTPTSYSTTHELQDIKTETYGVNSEEGQAFHTIPLVLFFFPGESGLDLEIVFDPVILHEREIERLTGRLETVLSAFSTANSVSDIQCIGREDLEDVWKWNAILPSSSKKLLHEDILECVQRAPDKVAIEAWDCKITYSQLDQLSENHAVHLNNYNVRKGTVVPILSLKSGLVPVAALAVLRAGGTLLPLDITQPVQRLKMIIDQVKPNVVMAGLSSIGIASQLCENVIVIKSCVDITPCAHGDAVYFETPSPDDVACILFTSGSTGIPKGVKQTHRGLSSAIKHQARESGFNENTRAFEFASYGFDVSWNMIFKVLAVGGTLCVPEEEERQNDLARALNRTAATLTELTPSVARLINPQQLTSLTTLILSGESVDPREFAHWKPQNHHQLMPVGAIGEIIIEGPIVGSGYYNNENLTSASYVHDVPWLRNDHDGNDARTSRVFKSGDLARFDSKGNIHFIARKDLQVKLNGQRIELEEVQHHVRNLMHDFVGPVISCVLGDSKQRSDQKLATFLVNKHGNTQGTCLAVPEEKAVEQLETLDERLREMLPKYMVPSIYYFVTAVPRTNNGKIDMKRLVEVAAMARPDQIYRGRTDRQRVRRIPSTPTEMKMQQLWAAALEVPIAEIGADDTFFNLNGDSISAMKLVAGARSEGFDLRVSDVFETPRLSELATKIAPRITKKQLAVSTIRPFELLGESANIVAIRSEVAAKCGMQDPGAVKDVYPCTPLQESMLAATIRDPRAFISMRVYRIRQGVDLVRLENAWATVVAQHPILRTRLVDLEHHGLTQAIFEESHIIWQTYVDMDSFLRHYEEQKMGPTTTLTRWALIDEADDWKLVWTIHHAIYDGWVLPIVEEEVRKTYFGSEQDKQYLDMKPLVKYILQEEKAKSIDFWARLLAGSEESIVYPPLPSHKYESSPATYLERTISADLSSSRGINLSALLYGSWSVLVSHMTGIPKVSFGAILTGRNAPVDGIDRMIGPAVTTVPILVDANPSFSVRKFMDRLQDMTVQRMPHEHLGVHAIRRINDACEAGCRFQTVLVIQPPGGNGHDTSNIQDSFLMEEVDETTIEGFPDQHSVLNQYGLMIEILPRGKEIKVRASFDSNLISTSQLSKTISRWERIINQISQTLSQGVHTTIQSLDSLSQQDIEEIWTWNKELPDVVDDRFVFEIIQEIAGRHPDALAIDAWDGQLTYRDLESLSTRVSELLVSFGVGPGSFVPLLFHKSMWTNVSMLGVLKVGAAFVPLDFSHPEGHLRAVMQPLNADIILCADNTRDRAARLSRRAIIVDERSLNADHGNNLATDIPNASVSHTGNAALHIDDLAYAVFTSGSTGAAKGVKVSHKNLVTAIHHHCKPERFQIGLNTRSLDSSSYSFDACIFNFFYTVTQGGCLCVPNDEALKGDIGAFMRQYKVNWAQLVPSVARTLNPKVLPDLKDLILTGEPLTRTDIETWCHNVRLFNVYGPTECTILCSISSPIKGSSHFGYIGRGQGANIWLTEIGNPDKLVPIGVPGEILIEGPIIGAGYLGPYQYPLVEDPPWLLAGTGHISGRQGKLFRTGDQALYTDDGTLVFIGRIGTDIKLRGQRVDIVAVEDIIRRHVPSGLEIAVGIARITVGGKVLAREMLLCFASQNQTFRDNGASPQNKLNDILRALVADIIPELDAAMPKYLHPEAFVALSSMPKTSSGKTDRRCLKEAEKQLRLHDLIWISTEMAESTNTPPSTQEEKVIAALWAEVIGIEHESISREDDFFKLGGDSLGVMRLTTKAHRLGLVLKSNDVFRNSKLASLAEKISWESIGPSEIAPYKPYSLVPEISDIDAFTANHIVPSLNIEANQVEDILPANGFQVDYIHNKEEPLGLRYAYLDIGPDVQWQRLIQACRTMLQGYECFRARFILYKGRYYQIILRDAPFIIEEISATQQIAIFSQQLCRADLHAASLSDVFSKMTLVNVGINRRRVILRLSHMQHDGWCTTQLLNAVAAAFNSLEIEKTPKWTSVLHYRHLMVEESCRYWRTKLQGATQITPSLVYKPGGSKVRTLRSYALSNFHASDDNRRTRPTVVVNVAWALILEQLAGHQDVVFGNVTTGRNGNMPGLDSVVGPCVNMLPMRLQLQSHSTTNREHKLRDLVEASAQQVDDGAFHNGLDWDELIDKCTTCVSGSRYKSAVHFRNMEFEPELSLGGDRVVVQWYELVETPRWTTVLVYPEENVLRLWLLADPAQIGDDGADEILHMLAGYCEEIVQSLQT</sequence>
<accession>A0A0U1LQE6</accession>
<organism>
    <name type="scientific">Talaromyces islandicus</name>
    <name type="common">Penicillium islandicum</name>
    <dbReference type="NCBI Taxonomy" id="28573"/>
    <lineage>
        <taxon>Eukaryota</taxon>
        <taxon>Fungi</taxon>
        <taxon>Dikarya</taxon>
        <taxon>Ascomycota</taxon>
        <taxon>Pezizomycotina</taxon>
        <taxon>Eurotiomycetes</taxon>
        <taxon>Eurotiomycetidae</taxon>
        <taxon>Eurotiales</taxon>
        <taxon>Trichocomaceae</taxon>
        <taxon>Talaromyces</taxon>
        <taxon>Talaromyces sect. Islandici</taxon>
    </lineage>
</organism>
<reference key="1">
    <citation type="journal article" date="2015" name="J. Biotechnol.">
        <title>Draft genome sequence of Talaromyces islandicus ('Penicillium islandicum') WF-38-12, a neglected mold with significant biotechnological potential.</title>
        <authorList>
            <person name="Schafhauser T."/>
            <person name="Wibberg D."/>
            <person name="Rueckert C."/>
            <person name="Winkler A."/>
            <person name="Flor L."/>
            <person name="van Pee K.-H."/>
            <person name="Fewer D.P."/>
            <person name="Sivonen K."/>
            <person name="Jahn L."/>
            <person name="Ludwig-Mueller J."/>
            <person name="Caradec T."/>
            <person name="Jacques P."/>
            <person name="Huijbers M.M.E."/>
            <person name="van Berkel W.J.H."/>
            <person name="Weber T."/>
            <person name="Wohlleben W."/>
            <person name="Kalinowski J."/>
        </authorList>
    </citation>
    <scope>NUCLEOTIDE SEQUENCE [LARGE SCALE GENOMIC DNA]</scope>
    <source>
        <strain>ATCC 26535 / WF-38-12</strain>
    </source>
</reference>
<reference key="2">
    <citation type="journal article" date="2016" name="Environ. Microbiol.">
        <title>The cyclochlorotine mycotoxin is produced by the nonribosomal peptide synthetase CctN in Talaromyces islandicus ('Penicillium islandicum').</title>
        <authorList>
            <person name="Schafhauser T."/>
            <person name="Kirchner N."/>
            <person name="Kulik A."/>
            <person name="Huijbers M.M."/>
            <person name="Flor L."/>
            <person name="Caradec T."/>
            <person name="Fewer D.P."/>
            <person name="Gross H."/>
            <person name="Jacques P."/>
            <person name="Jahn L."/>
            <person name="Jokela J."/>
            <person name="Leclere V."/>
            <person name="Ludwig-Mueller J."/>
            <person name="Sivonen K."/>
            <person name="van Berkel W.J."/>
            <person name="Weber T."/>
            <person name="Wohlleben W."/>
            <person name="van Pee K.H."/>
        </authorList>
    </citation>
    <scope>FUNCTION</scope>
    <scope>DISRUPTION PHENOTYPE</scope>
    <scope>DOMAIN</scope>
    <scope>PATHWAY</scope>
</reference>
<reference key="3">
    <citation type="journal article" date="2021" name="Org. Lett.">
        <title>Biosynthesis of cyclochlorotine: identification of the genes involved in oxidative transformations and intramolecular O,N-transacylation.</title>
        <authorList>
            <person name="Jiang Y."/>
            <person name="Ozaki T."/>
            <person name="Liu C."/>
            <person name="Igarashi Y."/>
            <person name="Ye Y."/>
            <person name="Tang S."/>
            <person name="Ye T."/>
            <person name="Maruyama J.I."/>
            <person name="Minami A."/>
            <person name="Oikawa H."/>
        </authorList>
    </citation>
    <scope>FUNCTION</scope>
</reference>
<gene>
    <name evidence="6" type="primary">cctN</name>
    <name type="ORF">PISL3812_02619</name>
</gene>
<keyword id="KW-0413">Isomerase</keyword>
<keyword id="KW-0436">Ligase</keyword>
<keyword id="KW-0596">Phosphopantetheine</keyword>
<keyword id="KW-0597">Phosphoprotein</keyword>
<keyword id="KW-1185">Reference proteome</keyword>
<keyword id="KW-0677">Repeat</keyword>
<keyword id="KW-0843">Virulence</keyword>
<name>CCTN_TALIS</name>
<dbReference type="EC" id="6.3.2.-" evidence="8"/>
<dbReference type="EMBL" id="CVMT01000002">
    <property type="protein sequence ID" value="CRG85572.1"/>
    <property type="molecule type" value="Genomic_DNA"/>
</dbReference>
<dbReference type="SMR" id="A0A0U1LQE6"/>
<dbReference type="STRING" id="28573.A0A0U1LQE6"/>
<dbReference type="OMA" id="PHQFTIC"/>
<dbReference type="OrthoDB" id="416786at2759"/>
<dbReference type="Proteomes" id="UP000054383">
    <property type="component" value="Unassembled WGS sequence"/>
</dbReference>
<dbReference type="GO" id="GO:0005737">
    <property type="term" value="C:cytoplasm"/>
    <property type="evidence" value="ECO:0007669"/>
    <property type="project" value="TreeGrafter"/>
</dbReference>
<dbReference type="GO" id="GO:0016853">
    <property type="term" value="F:isomerase activity"/>
    <property type="evidence" value="ECO:0007669"/>
    <property type="project" value="UniProtKB-KW"/>
</dbReference>
<dbReference type="GO" id="GO:0016874">
    <property type="term" value="F:ligase activity"/>
    <property type="evidence" value="ECO:0007669"/>
    <property type="project" value="UniProtKB-KW"/>
</dbReference>
<dbReference type="GO" id="GO:0031177">
    <property type="term" value="F:phosphopantetheine binding"/>
    <property type="evidence" value="ECO:0007669"/>
    <property type="project" value="InterPro"/>
</dbReference>
<dbReference type="GO" id="GO:0043041">
    <property type="term" value="P:amino acid activation for nonribosomal peptide biosynthetic process"/>
    <property type="evidence" value="ECO:0007669"/>
    <property type="project" value="TreeGrafter"/>
</dbReference>
<dbReference type="GO" id="GO:0044550">
    <property type="term" value="P:secondary metabolite biosynthetic process"/>
    <property type="evidence" value="ECO:0007669"/>
    <property type="project" value="TreeGrafter"/>
</dbReference>
<dbReference type="CDD" id="cd05918">
    <property type="entry name" value="A_NRPS_SidN3_like"/>
    <property type="match status" value="5"/>
</dbReference>
<dbReference type="CDD" id="cd19542">
    <property type="entry name" value="CT_NRPS-like"/>
    <property type="match status" value="1"/>
</dbReference>
<dbReference type="CDD" id="cd19545">
    <property type="entry name" value="FUM14_C_NRPS-like"/>
    <property type="match status" value="4"/>
</dbReference>
<dbReference type="FunFam" id="3.30.300.30:FF:000015">
    <property type="entry name" value="Nonribosomal peptide synthase SidD"/>
    <property type="match status" value="5"/>
</dbReference>
<dbReference type="FunFam" id="3.30.559.30:FF:000003">
    <property type="entry name" value="Nonribosomal peptide synthase SidD"/>
    <property type="match status" value="2"/>
</dbReference>
<dbReference type="FunFam" id="1.10.1200.10:FF:000005">
    <property type="entry name" value="Nonribosomal peptide synthetase 1"/>
    <property type="match status" value="1"/>
</dbReference>
<dbReference type="Gene3D" id="3.30.300.30">
    <property type="match status" value="5"/>
</dbReference>
<dbReference type="Gene3D" id="3.40.50.980">
    <property type="match status" value="2"/>
</dbReference>
<dbReference type="Gene3D" id="1.10.1200.10">
    <property type="entry name" value="ACP-like"/>
    <property type="match status" value="5"/>
</dbReference>
<dbReference type="Gene3D" id="3.30.559.10">
    <property type="entry name" value="Chloramphenicol acetyltransferase-like domain"/>
    <property type="match status" value="5"/>
</dbReference>
<dbReference type="Gene3D" id="2.30.38.10">
    <property type="entry name" value="Luciferase, Domain 3"/>
    <property type="match status" value="2"/>
</dbReference>
<dbReference type="Gene3D" id="3.40.50.12780">
    <property type="entry name" value="N-terminal domain of ligase-like"/>
    <property type="match status" value="4"/>
</dbReference>
<dbReference type="Gene3D" id="3.30.559.30">
    <property type="entry name" value="Nonribosomal peptide synthetase, condensation domain"/>
    <property type="match status" value="5"/>
</dbReference>
<dbReference type="InterPro" id="IPR010071">
    <property type="entry name" value="AA_adenyl_dom"/>
</dbReference>
<dbReference type="InterPro" id="IPR036736">
    <property type="entry name" value="ACP-like_sf"/>
</dbReference>
<dbReference type="InterPro" id="IPR045851">
    <property type="entry name" value="AMP-bd_C_sf"/>
</dbReference>
<dbReference type="InterPro" id="IPR020845">
    <property type="entry name" value="AMP-binding_CS"/>
</dbReference>
<dbReference type="InterPro" id="IPR000873">
    <property type="entry name" value="AMP-dep_synth/lig_dom"/>
</dbReference>
<dbReference type="InterPro" id="IPR042099">
    <property type="entry name" value="ANL_N_sf"/>
</dbReference>
<dbReference type="InterPro" id="IPR023213">
    <property type="entry name" value="CAT-like_dom_sf"/>
</dbReference>
<dbReference type="InterPro" id="IPR001242">
    <property type="entry name" value="Condensatn"/>
</dbReference>
<dbReference type="InterPro" id="IPR020806">
    <property type="entry name" value="PKS_PP-bd"/>
</dbReference>
<dbReference type="InterPro" id="IPR009081">
    <property type="entry name" value="PP-bd_ACP"/>
</dbReference>
<dbReference type="InterPro" id="IPR006162">
    <property type="entry name" value="Ppantetheine_attach_site"/>
</dbReference>
<dbReference type="NCBIfam" id="TIGR01733">
    <property type="entry name" value="AA-adenyl-dom"/>
    <property type="match status" value="3"/>
</dbReference>
<dbReference type="NCBIfam" id="NF003417">
    <property type="entry name" value="PRK04813.1"/>
    <property type="match status" value="6"/>
</dbReference>
<dbReference type="PANTHER" id="PTHR45527:SF1">
    <property type="entry name" value="FATTY ACID SYNTHASE"/>
    <property type="match status" value="1"/>
</dbReference>
<dbReference type="PANTHER" id="PTHR45527">
    <property type="entry name" value="NONRIBOSOMAL PEPTIDE SYNTHETASE"/>
    <property type="match status" value="1"/>
</dbReference>
<dbReference type="Pfam" id="PF00501">
    <property type="entry name" value="AMP-binding"/>
    <property type="match status" value="5"/>
</dbReference>
<dbReference type="Pfam" id="PF00668">
    <property type="entry name" value="Condensation"/>
    <property type="match status" value="5"/>
</dbReference>
<dbReference type="Pfam" id="PF00550">
    <property type="entry name" value="PP-binding"/>
    <property type="match status" value="5"/>
</dbReference>
<dbReference type="SMART" id="SM00823">
    <property type="entry name" value="PKS_PP"/>
    <property type="match status" value="4"/>
</dbReference>
<dbReference type="SUPFAM" id="SSF56801">
    <property type="entry name" value="Acetyl-CoA synthetase-like"/>
    <property type="match status" value="5"/>
</dbReference>
<dbReference type="SUPFAM" id="SSF47336">
    <property type="entry name" value="ACP-like"/>
    <property type="match status" value="5"/>
</dbReference>
<dbReference type="SUPFAM" id="SSF52777">
    <property type="entry name" value="CoA-dependent acyltransferases"/>
    <property type="match status" value="10"/>
</dbReference>
<dbReference type="PROSITE" id="PS00455">
    <property type="entry name" value="AMP_BINDING"/>
    <property type="match status" value="4"/>
</dbReference>
<dbReference type="PROSITE" id="PS50075">
    <property type="entry name" value="CARRIER"/>
    <property type="match status" value="5"/>
</dbReference>
<dbReference type="PROSITE" id="PS00012">
    <property type="entry name" value="PHOSPHOPANTETHEINE"/>
    <property type="match status" value="2"/>
</dbReference>